<organism>
    <name type="scientific">Drosophila mojavensis</name>
    <name type="common">Fruit fly</name>
    <dbReference type="NCBI Taxonomy" id="7230"/>
    <lineage>
        <taxon>Eukaryota</taxon>
        <taxon>Metazoa</taxon>
        <taxon>Ecdysozoa</taxon>
        <taxon>Arthropoda</taxon>
        <taxon>Hexapoda</taxon>
        <taxon>Insecta</taxon>
        <taxon>Pterygota</taxon>
        <taxon>Neoptera</taxon>
        <taxon>Endopterygota</taxon>
        <taxon>Diptera</taxon>
        <taxon>Brachycera</taxon>
        <taxon>Muscomorpha</taxon>
        <taxon>Ephydroidea</taxon>
        <taxon>Drosophilidae</taxon>
        <taxon>Drosophila</taxon>
    </lineage>
</organism>
<protein>
    <recommendedName>
        <fullName evidence="3">Protein wntless</fullName>
    </recommendedName>
</protein>
<evidence type="ECO:0000250" key="1"/>
<evidence type="ECO:0000250" key="2">
    <source>
        <dbReference type="UniProtKB" id="Q5T9L3"/>
    </source>
</evidence>
<evidence type="ECO:0000250" key="3">
    <source>
        <dbReference type="UniProtKB" id="Q95ST2"/>
    </source>
</evidence>
<evidence type="ECO:0000255" key="4"/>
<evidence type="ECO:0000256" key="5">
    <source>
        <dbReference type="SAM" id="MobiDB-lite"/>
    </source>
</evidence>
<evidence type="ECO:0000312" key="6">
    <source>
        <dbReference type="EMBL" id="EDW19266.1"/>
    </source>
</evidence>
<gene>
    <name evidence="3" type="primary">wls</name>
    <name type="ORF">GI11620</name>
</gene>
<sequence>MSGTILENLSGRKLSILVSSLLLCQVACFLIGGLYAPVPAGHQIVMGIKCRDVAGRQNDTSFFLYSRGNGACDSVQDIDIEQDPLKMANQLVYVFQMPLPRDNRTLDYSRWQQNLIGVLQMDIAYDSSSELREPPKELQLTIDTRLAYRNKNDEDADWKPYAHSIEKRFLDCRAAHVGLQEILYTCDIIPLFELGALHHSFYLLNLRFPMDTPKRLNLQFGHMHDIILTAIHQNGGFTQVWLLLKSVLFPFIIGIMVWFWRRVHILQRSPALLEYMLLYLGGALSFLNLPLEYLTLSFEMPYMLLLSDVRQGIFYAMLLSFWLVFAGEHMLIQDSPNKSTIRSRYWKHLSAVVVGCISLFVFDICERGMQLRNPFYSIWTTPLGAKVAMSFIVLAGVSAGIYFLFLCYMVWKVFKDIGDKRTSLPSMSQARRLHYEGLIYRFKFLMLATLLCAGLTVAGFIMGQMAEGHWKWNEDIEIQLTSAFLTGVYGMWNIYIFALLILYAPSHKQWPTMRHSDETTQSNENIVASAASEEIEFSNLPSDSNPSEISSLTSFTRKVAFD</sequence>
<proteinExistence type="inferred from homology"/>
<comment type="function">
    <text evidence="1">A segment polarity gene required for wingless (wg)-dependent patterning processes, acting in both wg-sending cells and wg-target cells. In non-neuronal cells wls directs wg secretion. The wls traffic loop encompasses the Golgi, the cell surface, an endocytic compartment and a retrograde route leading back to the Golgi, and involves clathrin-mediated endocytosis and the retromer complex (a conserved protein complex consisting of Vps35 and Vps26). In neuronal cells (the larval motorneuron NMJ), the wg signal moves across the synapse via the release of wls-containing exosome-like vesicles. Postsynaptic wls is required for the trafficking of fz2 through the fz2-interacting protein Grip (By similarity).</text>
</comment>
<comment type="subunit">
    <text evidence="1">Interacts with wg; in the Golgi. Interacts with Vps35, a component of the retromer complex; wls stability is regulated by Vps35 (By similarity).</text>
</comment>
<comment type="subcellular location">
    <subcellularLocation>
        <location evidence="3">Presynaptic cell membrane</location>
        <topology evidence="3">Multi-pass membrane protein</topology>
    </subcellularLocation>
    <subcellularLocation>
        <location evidence="3">Postsynaptic cell membrane</location>
        <topology evidence="3">Multi-pass membrane protein</topology>
    </subcellularLocation>
    <subcellularLocation>
        <location evidence="3">Cell membrane</location>
        <topology evidence="3">Multi-pass membrane protein</topology>
    </subcellularLocation>
    <subcellularLocation>
        <location evidence="3">Endoplasmic reticulum membrane</location>
        <topology evidence="3">Multi-pass membrane protein</topology>
    </subcellularLocation>
    <subcellularLocation>
        <location evidence="3">Endosome membrane</location>
        <topology evidence="3">Multi-pass membrane protein</topology>
    </subcellularLocation>
    <subcellularLocation>
        <location evidence="3">Golgi apparatus membrane</location>
        <topology evidence="3">Multi-pass membrane protein</topology>
    </subcellularLocation>
    <text evidence="1">In non-neuronal cells, wls binds to wg in the Golgi and accompanies it to the plasma membrane where the two proteins dissociate. Wg is secreted and wls is then internalized and returns to the Golgi apparatus in a retromer-dependent manner. Wls and wg colocalize in the Golgi apparatus in wg-producing cells, and reduced expression is seen in non-producing cells. Endoplasmic reticulum expression is unchanged in wg-producing versus non-producing cells. In neuronal cells, wls is localized both pre- and postsynaptically and is transferred trans-synaptically from the pre- to the postsynaptic compartment (By similarity).</text>
</comment>
<comment type="similarity">
    <text evidence="4">Belongs to the wntless family.</text>
</comment>
<feature type="chain" id="PRO_0000390665" description="Protein wntless" evidence="4">
    <location>
        <begin position="1"/>
        <end position="562"/>
    </location>
</feature>
<feature type="topological domain" description="Cytoplasmic" evidence="2">
    <location>
        <begin position="1"/>
        <end position="13"/>
    </location>
</feature>
<feature type="transmembrane region" description="Helical; Name=1" evidence="4">
    <location>
        <begin position="14"/>
        <end position="34"/>
    </location>
</feature>
<feature type="topological domain" description="Lumenal" evidence="2">
    <location>
        <begin position="35"/>
        <end position="239"/>
    </location>
</feature>
<feature type="transmembrane region" description="Helical; Name=2" evidence="4">
    <location>
        <begin position="240"/>
        <end position="260"/>
    </location>
</feature>
<feature type="topological domain" description="Cytoplasmic" evidence="2">
    <location>
        <begin position="261"/>
        <end position="270"/>
    </location>
</feature>
<feature type="transmembrane region" description="Helical; Name=3" evidence="4">
    <location>
        <begin position="271"/>
        <end position="291"/>
    </location>
</feature>
<feature type="topological domain" description="Lumenal" evidence="2">
    <location>
        <begin position="292"/>
        <end position="311"/>
    </location>
</feature>
<feature type="transmembrane region" description="Helical; Name=4" evidence="4">
    <location>
        <begin position="312"/>
        <end position="332"/>
    </location>
</feature>
<feature type="topological domain" description="Cytoplasmic" evidence="2">
    <location>
        <begin position="333"/>
        <end position="344"/>
    </location>
</feature>
<feature type="transmembrane region" description="Helical; Name=5" evidence="4">
    <location>
        <begin position="345"/>
        <end position="365"/>
    </location>
</feature>
<feature type="topological domain" description="Lumenal" evidence="2">
    <location>
        <begin position="366"/>
        <end position="390"/>
    </location>
</feature>
<feature type="transmembrane region" description="Helical; Name=6" evidence="4">
    <location>
        <begin position="391"/>
        <end position="411"/>
    </location>
</feature>
<feature type="topological domain" description="Cytoplasmic" evidence="2">
    <location>
        <begin position="412"/>
        <end position="441"/>
    </location>
</feature>
<feature type="transmembrane region" description="Helical; Name=7" evidence="4">
    <location>
        <begin position="442"/>
        <end position="462"/>
    </location>
</feature>
<feature type="topological domain" description="Lumenal" evidence="2">
    <location>
        <begin position="463"/>
        <end position="482"/>
    </location>
</feature>
<feature type="transmembrane region" description="Helical; Name=8" evidence="4">
    <location>
        <begin position="483"/>
        <end position="503"/>
    </location>
</feature>
<feature type="topological domain" description="Cytoplasmic" evidence="2">
    <location>
        <begin position="504"/>
        <end position="562"/>
    </location>
</feature>
<feature type="region of interest" description="Disordered" evidence="5">
    <location>
        <begin position="538"/>
        <end position="562"/>
    </location>
</feature>
<feature type="compositionally biased region" description="Polar residues" evidence="5">
    <location>
        <begin position="539"/>
        <end position="556"/>
    </location>
</feature>
<feature type="glycosylation site" description="N-linked (GlcNAc...) asparagine" evidence="4">
    <location>
        <position position="58"/>
    </location>
</feature>
<feature type="glycosylation site" description="N-linked (GlcNAc...) asparagine" evidence="4">
    <location>
        <position position="103"/>
    </location>
</feature>
<reference evidence="6" key="1">
    <citation type="journal article" date="2007" name="Nature">
        <title>Evolution of genes and genomes on the Drosophila phylogeny.</title>
        <authorList>
            <consortium name="Drosophila 12 genomes consortium"/>
        </authorList>
    </citation>
    <scope>NUCLEOTIDE SEQUENCE [LARGE SCALE GENOMIC DNA]</scope>
    <source>
        <strain evidence="6">Tucson 15081-1352.22</strain>
    </source>
</reference>
<dbReference type="EMBL" id="CH933809">
    <property type="protein sequence ID" value="EDW19266.1"/>
    <property type="molecule type" value="Genomic_DNA"/>
</dbReference>
<dbReference type="RefSeq" id="XP_002008790.2">
    <property type="nucleotide sequence ID" value="XM_002008754.2"/>
</dbReference>
<dbReference type="SMR" id="B4L184"/>
<dbReference type="FunCoup" id="B4L184">
    <property type="interactions" value="614"/>
</dbReference>
<dbReference type="GlyCosmos" id="B4L184">
    <property type="glycosylation" value="2 sites, No reported glycans"/>
</dbReference>
<dbReference type="EnsemblMetazoa" id="FBtr0162345">
    <property type="protein sequence ID" value="FBpp0160837"/>
    <property type="gene ID" value="FBgn0134380"/>
</dbReference>
<dbReference type="EnsemblMetazoa" id="XM_032731156.2">
    <property type="protein sequence ID" value="XP_032587047.1"/>
    <property type="gene ID" value="LOC6583112"/>
</dbReference>
<dbReference type="KEGG" id="dmo:Dmoj_GI11620"/>
<dbReference type="eggNOG" id="ENOG502QSE2">
    <property type="taxonomic scope" value="Eukaryota"/>
</dbReference>
<dbReference type="HOGENOM" id="CLU_022911_0_0_1"/>
<dbReference type="InParanoid" id="B4L184"/>
<dbReference type="OMA" id="GQWKWDE"/>
<dbReference type="OrthoDB" id="5804250at2759"/>
<dbReference type="PhylomeDB" id="B4L184"/>
<dbReference type="Proteomes" id="UP000009192">
    <property type="component" value="Unassembled WGS sequence"/>
</dbReference>
<dbReference type="GO" id="GO:0042995">
    <property type="term" value="C:cell projection"/>
    <property type="evidence" value="ECO:0007669"/>
    <property type="project" value="UniProtKB-KW"/>
</dbReference>
<dbReference type="GO" id="GO:0005769">
    <property type="term" value="C:early endosome"/>
    <property type="evidence" value="ECO:0007669"/>
    <property type="project" value="EnsemblMetazoa"/>
</dbReference>
<dbReference type="GO" id="GO:0005789">
    <property type="term" value="C:endoplasmic reticulum membrane"/>
    <property type="evidence" value="ECO:0000250"/>
    <property type="project" value="UniProtKB"/>
</dbReference>
<dbReference type="GO" id="GO:0010008">
    <property type="term" value="C:endosome membrane"/>
    <property type="evidence" value="ECO:0000250"/>
    <property type="project" value="UniProtKB"/>
</dbReference>
<dbReference type="GO" id="GO:0070062">
    <property type="term" value="C:extracellular exosome"/>
    <property type="evidence" value="ECO:0007669"/>
    <property type="project" value="EnsemblMetazoa"/>
</dbReference>
<dbReference type="GO" id="GO:0000139">
    <property type="term" value="C:Golgi membrane"/>
    <property type="evidence" value="ECO:0000250"/>
    <property type="project" value="UniProtKB"/>
</dbReference>
<dbReference type="GO" id="GO:0005771">
    <property type="term" value="C:multivesicular body"/>
    <property type="evidence" value="ECO:0007669"/>
    <property type="project" value="EnsemblMetazoa"/>
</dbReference>
<dbReference type="GO" id="GO:0031594">
    <property type="term" value="C:neuromuscular junction"/>
    <property type="evidence" value="ECO:0000250"/>
    <property type="project" value="UniProtKB"/>
</dbReference>
<dbReference type="GO" id="GO:0005886">
    <property type="term" value="C:plasma membrane"/>
    <property type="evidence" value="ECO:0000250"/>
    <property type="project" value="UniProtKB"/>
</dbReference>
<dbReference type="GO" id="GO:0045211">
    <property type="term" value="C:postsynaptic membrane"/>
    <property type="evidence" value="ECO:0000250"/>
    <property type="project" value="UniProtKB"/>
</dbReference>
<dbReference type="GO" id="GO:0042734">
    <property type="term" value="C:presynaptic membrane"/>
    <property type="evidence" value="ECO:0000250"/>
    <property type="project" value="UniProtKB"/>
</dbReference>
<dbReference type="GO" id="GO:0030672">
    <property type="term" value="C:synaptic vesicle membrane"/>
    <property type="evidence" value="ECO:0000250"/>
    <property type="project" value="UniProtKB"/>
</dbReference>
<dbReference type="GO" id="GO:0017147">
    <property type="term" value="F:Wnt-protein binding"/>
    <property type="evidence" value="ECO:0000250"/>
    <property type="project" value="UniProtKB"/>
</dbReference>
<dbReference type="GO" id="GO:0001745">
    <property type="term" value="P:compound eye morphogenesis"/>
    <property type="evidence" value="ECO:0007669"/>
    <property type="project" value="EnsemblMetazoa"/>
</dbReference>
<dbReference type="GO" id="GO:0035017">
    <property type="term" value="P:cuticle pattern formation"/>
    <property type="evidence" value="ECO:0007669"/>
    <property type="project" value="EnsemblMetazoa"/>
</dbReference>
<dbReference type="GO" id="GO:0043001">
    <property type="term" value="P:Golgi to plasma membrane protein transport"/>
    <property type="evidence" value="ECO:0007669"/>
    <property type="project" value="EnsemblMetazoa"/>
</dbReference>
<dbReference type="GO" id="GO:0007480">
    <property type="term" value="P:imaginal disc-derived leg morphogenesis"/>
    <property type="evidence" value="ECO:0007669"/>
    <property type="project" value="EnsemblMetazoa"/>
</dbReference>
<dbReference type="GO" id="GO:0008587">
    <property type="term" value="P:imaginal disc-derived wing margin morphogenesis"/>
    <property type="evidence" value="ECO:0000250"/>
    <property type="project" value="UniProtKB"/>
</dbReference>
<dbReference type="GO" id="GO:0006886">
    <property type="term" value="P:intracellular protein transport"/>
    <property type="evidence" value="ECO:0007669"/>
    <property type="project" value="TreeGrafter"/>
</dbReference>
<dbReference type="GO" id="GO:0050714">
    <property type="term" value="P:positive regulation of protein secretion"/>
    <property type="evidence" value="ECO:0000250"/>
    <property type="project" value="UniProtKB"/>
</dbReference>
<dbReference type="GO" id="GO:0061357">
    <property type="term" value="P:positive regulation of Wnt protein secretion"/>
    <property type="evidence" value="ECO:0007669"/>
    <property type="project" value="EnsemblMetazoa"/>
</dbReference>
<dbReference type="GO" id="GO:0030177">
    <property type="term" value="P:positive regulation of Wnt signaling pathway"/>
    <property type="evidence" value="ECO:0000250"/>
    <property type="project" value="UniProtKB"/>
</dbReference>
<dbReference type="GO" id="GO:0033157">
    <property type="term" value="P:regulation of intracellular protein transport"/>
    <property type="evidence" value="ECO:0000250"/>
    <property type="project" value="UniProtKB"/>
</dbReference>
<dbReference type="GO" id="GO:0007367">
    <property type="term" value="P:segment polarity determination"/>
    <property type="evidence" value="ECO:0000250"/>
    <property type="project" value="UniProtKB"/>
</dbReference>
<dbReference type="GO" id="GO:0099157">
    <property type="term" value="P:trans-synaptic signaling via exosome"/>
    <property type="evidence" value="ECO:0007669"/>
    <property type="project" value="EnsemblMetazoa"/>
</dbReference>
<dbReference type="GO" id="GO:0061355">
    <property type="term" value="P:Wnt protein secretion"/>
    <property type="evidence" value="ECO:0007669"/>
    <property type="project" value="EnsemblMetazoa"/>
</dbReference>
<dbReference type="GO" id="GO:0016055">
    <property type="term" value="P:Wnt signaling pathway"/>
    <property type="evidence" value="ECO:0007669"/>
    <property type="project" value="UniProtKB-KW"/>
</dbReference>
<dbReference type="InterPro" id="IPR047843">
    <property type="entry name" value="WLS-like_TM"/>
</dbReference>
<dbReference type="InterPro" id="IPR053936">
    <property type="entry name" value="WLS_GOLD"/>
</dbReference>
<dbReference type="InterPro" id="IPR009551">
    <property type="entry name" value="Wntless"/>
</dbReference>
<dbReference type="PANTHER" id="PTHR13449">
    <property type="entry name" value="INTEGRAL MEMBRANE PROTEIN GPR177"/>
    <property type="match status" value="1"/>
</dbReference>
<dbReference type="PANTHER" id="PTHR13449:SF2">
    <property type="entry name" value="PROTEIN WNTLESS HOMOLOG"/>
    <property type="match status" value="1"/>
</dbReference>
<dbReference type="Pfam" id="PF06664">
    <property type="entry name" value="WLS-like_TM"/>
    <property type="match status" value="1"/>
</dbReference>
<dbReference type="Pfam" id="PF21883">
    <property type="entry name" value="WLS_GOLD"/>
    <property type="match status" value="1"/>
</dbReference>
<accession>B4L184</accession>
<keyword id="KW-1003">Cell membrane</keyword>
<keyword id="KW-0966">Cell projection</keyword>
<keyword id="KW-0217">Developmental protein</keyword>
<keyword id="KW-0256">Endoplasmic reticulum</keyword>
<keyword id="KW-0967">Endosome</keyword>
<keyword id="KW-0325">Glycoprotein</keyword>
<keyword id="KW-0333">Golgi apparatus</keyword>
<keyword id="KW-0472">Membrane</keyword>
<keyword id="KW-0628">Postsynaptic cell membrane</keyword>
<keyword id="KW-1185">Reference proteome</keyword>
<keyword id="KW-0709">Segmentation polarity protein</keyword>
<keyword id="KW-0770">Synapse</keyword>
<keyword id="KW-0812">Transmembrane</keyword>
<keyword id="KW-1133">Transmembrane helix</keyword>
<keyword id="KW-0879">Wnt signaling pathway</keyword>
<name>WLS_DROMO</name>